<sequence>MSLLWQARFFTTVNHLRDLPKTQVPEIAFAGRSNAGKSTAINILCNQKKLAFASKTPGRTQHINYFSIGGAHVGQHRKDETKVDEIRALLVDLPGYGYAEVSGSAKLHWQELLGDYVQRREQLAALVLIVDSRRPFTELDIQMLEWFAPTGKPIHCLLTKSDKLNRNDAANALRTARTILGSYVDENGQPFPFTAQMFSALKRSGLDEANDKIIELLGLNEAPQEESNGPAANDV</sequence>
<name>ENGB_JANMA</name>
<proteinExistence type="inferred from homology"/>
<accession>A6T3H0</accession>
<organism>
    <name type="scientific">Janthinobacterium sp. (strain Marseille)</name>
    <name type="common">Minibacterium massiliensis</name>
    <dbReference type="NCBI Taxonomy" id="375286"/>
    <lineage>
        <taxon>Bacteria</taxon>
        <taxon>Pseudomonadati</taxon>
        <taxon>Pseudomonadota</taxon>
        <taxon>Betaproteobacteria</taxon>
        <taxon>Burkholderiales</taxon>
        <taxon>Oxalobacteraceae</taxon>
        <taxon>Janthinobacterium</taxon>
    </lineage>
</organism>
<dbReference type="EMBL" id="CP000269">
    <property type="protein sequence ID" value="ABR89835.1"/>
    <property type="molecule type" value="Genomic_DNA"/>
</dbReference>
<dbReference type="RefSeq" id="WP_012081220.1">
    <property type="nucleotide sequence ID" value="NC_009659.1"/>
</dbReference>
<dbReference type="SMR" id="A6T3H0"/>
<dbReference type="STRING" id="375286.mma_3377"/>
<dbReference type="KEGG" id="mms:mma_3377"/>
<dbReference type="eggNOG" id="COG0218">
    <property type="taxonomic scope" value="Bacteria"/>
</dbReference>
<dbReference type="HOGENOM" id="CLU_033732_1_1_4"/>
<dbReference type="OrthoDB" id="9804921at2"/>
<dbReference type="Proteomes" id="UP000006388">
    <property type="component" value="Chromosome"/>
</dbReference>
<dbReference type="GO" id="GO:0005829">
    <property type="term" value="C:cytosol"/>
    <property type="evidence" value="ECO:0007669"/>
    <property type="project" value="TreeGrafter"/>
</dbReference>
<dbReference type="GO" id="GO:0005525">
    <property type="term" value="F:GTP binding"/>
    <property type="evidence" value="ECO:0007669"/>
    <property type="project" value="UniProtKB-UniRule"/>
</dbReference>
<dbReference type="GO" id="GO:0046872">
    <property type="term" value="F:metal ion binding"/>
    <property type="evidence" value="ECO:0007669"/>
    <property type="project" value="UniProtKB-KW"/>
</dbReference>
<dbReference type="GO" id="GO:0000917">
    <property type="term" value="P:division septum assembly"/>
    <property type="evidence" value="ECO:0007669"/>
    <property type="project" value="UniProtKB-KW"/>
</dbReference>
<dbReference type="CDD" id="cd01876">
    <property type="entry name" value="YihA_EngB"/>
    <property type="match status" value="1"/>
</dbReference>
<dbReference type="FunFam" id="3.40.50.300:FF:000098">
    <property type="entry name" value="Probable GTP-binding protein EngB"/>
    <property type="match status" value="1"/>
</dbReference>
<dbReference type="Gene3D" id="3.40.50.300">
    <property type="entry name" value="P-loop containing nucleotide triphosphate hydrolases"/>
    <property type="match status" value="1"/>
</dbReference>
<dbReference type="HAMAP" id="MF_00321">
    <property type="entry name" value="GTPase_EngB"/>
    <property type="match status" value="1"/>
</dbReference>
<dbReference type="InterPro" id="IPR030393">
    <property type="entry name" value="G_ENGB_dom"/>
</dbReference>
<dbReference type="InterPro" id="IPR006073">
    <property type="entry name" value="GTP-bd"/>
</dbReference>
<dbReference type="InterPro" id="IPR019987">
    <property type="entry name" value="GTP-bd_ribosome_bio_YsxC"/>
</dbReference>
<dbReference type="InterPro" id="IPR027417">
    <property type="entry name" value="P-loop_NTPase"/>
</dbReference>
<dbReference type="NCBIfam" id="TIGR03598">
    <property type="entry name" value="GTPase_YsxC"/>
    <property type="match status" value="1"/>
</dbReference>
<dbReference type="PANTHER" id="PTHR11649:SF13">
    <property type="entry name" value="ENGB-TYPE G DOMAIN-CONTAINING PROTEIN"/>
    <property type="match status" value="1"/>
</dbReference>
<dbReference type="PANTHER" id="PTHR11649">
    <property type="entry name" value="MSS1/TRME-RELATED GTP-BINDING PROTEIN"/>
    <property type="match status" value="1"/>
</dbReference>
<dbReference type="Pfam" id="PF01926">
    <property type="entry name" value="MMR_HSR1"/>
    <property type="match status" value="1"/>
</dbReference>
<dbReference type="SUPFAM" id="SSF52540">
    <property type="entry name" value="P-loop containing nucleoside triphosphate hydrolases"/>
    <property type="match status" value="1"/>
</dbReference>
<dbReference type="PROSITE" id="PS51706">
    <property type="entry name" value="G_ENGB"/>
    <property type="match status" value="1"/>
</dbReference>
<keyword id="KW-0131">Cell cycle</keyword>
<keyword id="KW-0132">Cell division</keyword>
<keyword id="KW-0342">GTP-binding</keyword>
<keyword id="KW-0460">Magnesium</keyword>
<keyword id="KW-0479">Metal-binding</keyword>
<keyword id="KW-0547">Nucleotide-binding</keyword>
<keyword id="KW-0717">Septation</keyword>
<reference key="1">
    <citation type="journal article" date="2007" name="PLoS Genet.">
        <title>Genome analysis of Minibacterium massiliensis highlights the convergent evolution of water-living bacteria.</title>
        <authorList>
            <person name="Audic S."/>
            <person name="Robert C."/>
            <person name="Campagna B."/>
            <person name="Parinello H."/>
            <person name="Claverie J.-M."/>
            <person name="Raoult D."/>
            <person name="Drancourt M."/>
        </authorList>
    </citation>
    <scope>NUCLEOTIDE SEQUENCE [LARGE SCALE GENOMIC DNA]</scope>
    <source>
        <strain>Marseille</strain>
    </source>
</reference>
<gene>
    <name evidence="1" type="primary">engB</name>
    <name type="ordered locus">mma_3377</name>
</gene>
<comment type="function">
    <text evidence="1">Necessary for normal cell division and for the maintenance of normal septation.</text>
</comment>
<comment type="cofactor">
    <cofactor evidence="1">
        <name>Mg(2+)</name>
        <dbReference type="ChEBI" id="CHEBI:18420"/>
    </cofactor>
</comment>
<comment type="similarity">
    <text evidence="1">Belongs to the TRAFAC class TrmE-Era-EngA-EngB-Septin-like GTPase superfamily. EngB GTPase family.</text>
</comment>
<feature type="chain" id="PRO_1000005820" description="Probable GTP-binding protein EngB">
    <location>
        <begin position="1"/>
        <end position="235"/>
    </location>
</feature>
<feature type="domain" description="EngB-type G" evidence="1">
    <location>
        <begin position="23"/>
        <end position="219"/>
    </location>
</feature>
<feature type="binding site" evidence="1">
    <location>
        <begin position="31"/>
        <end position="38"/>
    </location>
    <ligand>
        <name>GTP</name>
        <dbReference type="ChEBI" id="CHEBI:37565"/>
    </ligand>
</feature>
<feature type="binding site" evidence="1">
    <location>
        <position position="38"/>
    </location>
    <ligand>
        <name>Mg(2+)</name>
        <dbReference type="ChEBI" id="CHEBI:18420"/>
    </ligand>
</feature>
<feature type="binding site" evidence="1">
    <location>
        <begin position="58"/>
        <end position="62"/>
    </location>
    <ligand>
        <name>GTP</name>
        <dbReference type="ChEBI" id="CHEBI:37565"/>
    </ligand>
</feature>
<feature type="binding site" evidence="1">
    <location>
        <position position="60"/>
    </location>
    <ligand>
        <name>Mg(2+)</name>
        <dbReference type="ChEBI" id="CHEBI:18420"/>
    </ligand>
</feature>
<feature type="binding site" evidence="1">
    <location>
        <begin position="92"/>
        <end position="95"/>
    </location>
    <ligand>
        <name>GTP</name>
        <dbReference type="ChEBI" id="CHEBI:37565"/>
    </ligand>
</feature>
<feature type="binding site" evidence="1">
    <location>
        <begin position="159"/>
        <end position="162"/>
    </location>
    <ligand>
        <name>GTP</name>
        <dbReference type="ChEBI" id="CHEBI:37565"/>
    </ligand>
</feature>
<feature type="binding site" evidence="1">
    <location>
        <begin position="193"/>
        <end position="200"/>
    </location>
    <ligand>
        <name>GTP</name>
        <dbReference type="ChEBI" id="CHEBI:37565"/>
    </ligand>
</feature>
<protein>
    <recommendedName>
        <fullName evidence="1">Probable GTP-binding protein EngB</fullName>
    </recommendedName>
</protein>
<evidence type="ECO:0000255" key="1">
    <source>
        <dbReference type="HAMAP-Rule" id="MF_00321"/>
    </source>
</evidence>